<name>DEOC_HAEI8</name>
<evidence type="ECO:0000255" key="1">
    <source>
        <dbReference type="HAMAP-Rule" id="MF_00114"/>
    </source>
</evidence>
<proteinExistence type="inferred from homology"/>
<gene>
    <name evidence="1" type="primary">deoC</name>
    <name type="ordered locus">NTHI1280</name>
</gene>
<accession>Q4QLH8</accession>
<reference key="1">
    <citation type="journal article" date="2005" name="J. Bacteriol.">
        <title>Genomic sequence of an otitis media isolate of nontypeable Haemophilus influenzae: comparative study with H. influenzae serotype d, strain KW20.</title>
        <authorList>
            <person name="Harrison A."/>
            <person name="Dyer D.W."/>
            <person name="Gillaspy A."/>
            <person name="Ray W.C."/>
            <person name="Mungur R."/>
            <person name="Carson M.B."/>
            <person name="Zhong H."/>
            <person name="Gipson J."/>
            <person name="Gipson M."/>
            <person name="Johnson L.S."/>
            <person name="Lewis L."/>
            <person name="Bakaletz L.O."/>
            <person name="Munson R.S. Jr."/>
        </authorList>
    </citation>
    <scope>NUCLEOTIDE SEQUENCE [LARGE SCALE GENOMIC DNA]</scope>
    <source>
        <strain>86-028NP</strain>
    </source>
</reference>
<dbReference type="EC" id="4.1.2.4" evidence="1"/>
<dbReference type="EMBL" id="CP000057">
    <property type="protein sequence ID" value="AAX88119.1"/>
    <property type="molecule type" value="Genomic_DNA"/>
</dbReference>
<dbReference type="RefSeq" id="WP_005690707.1">
    <property type="nucleotide sequence ID" value="NC_007146.2"/>
</dbReference>
<dbReference type="SMR" id="Q4QLH8"/>
<dbReference type="GeneID" id="93220123"/>
<dbReference type="KEGG" id="hit:NTHI1280"/>
<dbReference type="HOGENOM" id="CLU_053595_0_1_6"/>
<dbReference type="UniPathway" id="UPA00002">
    <property type="reaction ID" value="UER00468"/>
</dbReference>
<dbReference type="Proteomes" id="UP000002525">
    <property type="component" value="Chromosome"/>
</dbReference>
<dbReference type="GO" id="GO:0005737">
    <property type="term" value="C:cytoplasm"/>
    <property type="evidence" value="ECO:0007669"/>
    <property type="project" value="UniProtKB-SubCell"/>
</dbReference>
<dbReference type="GO" id="GO:0004139">
    <property type="term" value="F:deoxyribose-phosphate aldolase activity"/>
    <property type="evidence" value="ECO:0007669"/>
    <property type="project" value="UniProtKB-UniRule"/>
</dbReference>
<dbReference type="GO" id="GO:0006018">
    <property type="term" value="P:2-deoxyribose 1-phosphate catabolic process"/>
    <property type="evidence" value="ECO:0007669"/>
    <property type="project" value="UniProtKB-UniRule"/>
</dbReference>
<dbReference type="GO" id="GO:0016052">
    <property type="term" value="P:carbohydrate catabolic process"/>
    <property type="evidence" value="ECO:0007669"/>
    <property type="project" value="TreeGrafter"/>
</dbReference>
<dbReference type="GO" id="GO:0009264">
    <property type="term" value="P:deoxyribonucleotide catabolic process"/>
    <property type="evidence" value="ECO:0007669"/>
    <property type="project" value="InterPro"/>
</dbReference>
<dbReference type="CDD" id="cd00959">
    <property type="entry name" value="DeoC"/>
    <property type="match status" value="1"/>
</dbReference>
<dbReference type="FunFam" id="3.20.20.70:FF:000044">
    <property type="entry name" value="Deoxyribose-phosphate aldolase"/>
    <property type="match status" value="1"/>
</dbReference>
<dbReference type="Gene3D" id="3.20.20.70">
    <property type="entry name" value="Aldolase class I"/>
    <property type="match status" value="1"/>
</dbReference>
<dbReference type="HAMAP" id="MF_00114">
    <property type="entry name" value="DeoC_type1"/>
    <property type="match status" value="1"/>
</dbReference>
<dbReference type="InterPro" id="IPR013785">
    <property type="entry name" value="Aldolase_TIM"/>
</dbReference>
<dbReference type="InterPro" id="IPR011343">
    <property type="entry name" value="DeoC"/>
</dbReference>
<dbReference type="InterPro" id="IPR002915">
    <property type="entry name" value="DeoC/FbaB/LacD_aldolase"/>
</dbReference>
<dbReference type="InterPro" id="IPR028581">
    <property type="entry name" value="DeoC_typeI"/>
</dbReference>
<dbReference type="NCBIfam" id="TIGR00126">
    <property type="entry name" value="deoC"/>
    <property type="match status" value="1"/>
</dbReference>
<dbReference type="PANTHER" id="PTHR10889">
    <property type="entry name" value="DEOXYRIBOSE-PHOSPHATE ALDOLASE"/>
    <property type="match status" value="1"/>
</dbReference>
<dbReference type="PANTHER" id="PTHR10889:SF1">
    <property type="entry name" value="DEOXYRIBOSE-PHOSPHATE ALDOLASE"/>
    <property type="match status" value="1"/>
</dbReference>
<dbReference type="Pfam" id="PF01791">
    <property type="entry name" value="DeoC"/>
    <property type="match status" value="1"/>
</dbReference>
<dbReference type="PIRSF" id="PIRSF001357">
    <property type="entry name" value="DeoC"/>
    <property type="match status" value="1"/>
</dbReference>
<dbReference type="SMART" id="SM01133">
    <property type="entry name" value="DeoC"/>
    <property type="match status" value="1"/>
</dbReference>
<dbReference type="SUPFAM" id="SSF51569">
    <property type="entry name" value="Aldolase"/>
    <property type="match status" value="1"/>
</dbReference>
<protein>
    <recommendedName>
        <fullName evidence="1">Deoxyribose-phosphate aldolase</fullName>
        <shortName evidence="1">DERA</shortName>
        <ecNumber evidence="1">4.1.2.4</ecNumber>
    </recommendedName>
    <alternativeName>
        <fullName evidence="1">2-deoxy-D-ribose 5-phosphate aldolase</fullName>
    </alternativeName>
    <alternativeName>
        <fullName evidence="1">Phosphodeoxyriboaldolase</fullName>
        <shortName evidence="1">Deoxyriboaldolase</shortName>
    </alternativeName>
</protein>
<feature type="chain" id="PRO_0000231542" description="Deoxyribose-phosphate aldolase">
    <location>
        <begin position="1"/>
        <end position="223"/>
    </location>
</feature>
<feature type="active site" description="Proton donor/acceptor" evidence="1">
    <location>
        <position position="92"/>
    </location>
</feature>
<feature type="active site" description="Schiff-base intermediate with acetaldehyde" evidence="1">
    <location>
        <position position="154"/>
    </location>
</feature>
<feature type="active site" description="Proton donor/acceptor" evidence="1">
    <location>
        <position position="182"/>
    </location>
</feature>
<organism>
    <name type="scientific">Haemophilus influenzae (strain 86-028NP)</name>
    <dbReference type="NCBI Taxonomy" id="281310"/>
    <lineage>
        <taxon>Bacteria</taxon>
        <taxon>Pseudomonadati</taxon>
        <taxon>Pseudomonadota</taxon>
        <taxon>Gammaproteobacteria</taxon>
        <taxon>Pasteurellales</taxon>
        <taxon>Pasteurellaceae</taxon>
        <taxon>Haemophilus</taxon>
    </lineage>
</organism>
<keyword id="KW-0963">Cytoplasm</keyword>
<keyword id="KW-0456">Lyase</keyword>
<keyword id="KW-0704">Schiff base</keyword>
<comment type="function">
    <text evidence="1">Catalyzes a reversible aldol reaction between acetaldehyde and D-glyceraldehyde 3-phosphate to generate 2-deoxy-D-ribose 5-phosphate.</text>
</comment>
<comment type="catalytic activity">
    <reaction evidence="1">
        <text>2-deoxy-D-ribose 5-phosphate = D-glyceraldehyde 3-phosphate + acetaldehyde</text>
        <dbReference type="Rhea" id="RHEA:12821"/>
        <dbReference type="ChEBI" id="CHEBI:15343"/>
        <dbReference type="ChEBI" id="CHEBI:59776"/>
        <dbReference type="ChEBI" id="CHEBI:62877"/>
        <dbReference type="EC" id="4.1.2.4"/>
    </reaction>
</comment>
<comment type="pathway">
    <text evidence="1">Carbohydrate degradation; 2-deoxy-D-ribose 1-phosphate degradation; D-glyceraldehyde 3-phosphate and acetaldehyde from 2-deoxy-alpha-D-ribose 1-phosphate: step 2/2.</text>
</comment>
<comment type="subcellular location">
    <subcellularLocation>
        <location evidence="1">Cytoplasm</location>
    </subcellularLocation>
</comment>
<comment type="similarity">
    <text evidence="1">Belongs to the DeoC/FbaB aldolase family. DeoC type 1 subfamily.</text>
</comment>
<sequence length="223" mass="23540">MTSNQLAQYIDHTALTAEKNEQDISTLCNEAIEHGFYSVCINSGYIPLAKEKLAGSNVKICTVVGFPLGANLTSVKAFETQEAIKAGANEIDMVINVGWIKSQKWDAVKQDIQAVFNACNGTPLKVILETCLLTKDEIVKACEICKEIGVAFVKTSTGFNKGGATVEDVALMKQTVGNIGVKASGGVRDTETALAMIKAGATRIGASAGIAIISGTQDTQSTY</sequence>